<sequence length="267" mass="27676">MSFDVYVIRVFGKSRGSREAGMSVSAGLEVAAGSVASALAAQEGGAMRVELCHGLGGGGLTPSYGMLAVVRERLHIPLYVLIRPRGGDFVFSEEEMEVMCCDVECCVRLGCDGVVLGALDPAGEVDMGMMRVLIAVAGSLGVTFHRAIDVSADPGRTLEDVIALGCERVLTSGGRSSALEGAETIAALVAQAAGRVVVMPGAGVSAGNVLELRVRTGAHEFHASARSVVAARRLGPHPDIHDLGGDYDCTDVDKVRQLVRLLSQGAS</sequence>
<comment type="subcellular location">
    <subcellularLocation>
        <location evidence="1">Cytoplasm</location>
    </subcellularLocation>
</comment>
<comment type="similarity">
    <text evidence="1">Belongs to the CutC family.</text>
</comment>
<comment type="caution">
    <text evidence="1">Once thought to be involved in copper homeostasis, experiments in E.coli have shown this is not the case.</text>
</comment>
<protein>
    <recommendedName>
        <fullName evidence="1">PF03932 family protein CutC</fullName>
    </recommendedName>
</protein>
<keyword id="KW-0963">Cytoplasm</keyword>
<evidence type="ECO:0000255" key="1">
    <source>
        <dbReference type="HAMAP-Rule" id="MF_00795"/>
    </source>
</evidence>
<proteinExistence type="inferred from homology"/>
<reference key="1">
    <citation type="journal article" date="2000" name="Nature">
        <title>The genome sequence of the plant pathogen Xylella fastidiosa.</title>
        <authorList>
            <person name="Simpson A.J.G."/>
            <person name="Reinach F.C."/>
            <person name="Arruda P."/>
            <person name="Abreu F.A."/>
            <person name="Acencio M."/>
            <person name="Alvarenga R."/>
            <person name="Alves L.M.C."/>
            <person name="Araya J.E."/>
            <person name="Baia G.S."/>
            <person name="Baptista C.S."/>
            <person name="Barros M.H."/>
            <person name="Bonaccorsi E.D."/>
            <person name="Bordin S."/>
            <person name="Bove J.M."/>
            <person name="Briones M.R.S."/>
            <person name="Bueno M.R.P."/>
            <person name="Camargo A.A."/>
            <person name="Camargo L.E.A."/>
            <person name="Carraro D.M."/>
            <person name="Carrer H."/>
            <person name="Colauto N.B."/>
            <person name="Colombo C."/>
            <person name="Costa F.F."/>
            <person name="Costa M.C.R."/>
            <person name="Costa-Neto C.M."/>
            <person name="Coutinho L.L."/>
            <person name="Cristofani M."/>
            <person name="Dias-Neto E."/>
            <person name="Docena C."/>
            <person name="El-Dorry H."/>
            <person name="Facincani A.P."/>
            <person name="Ferreira A.J.S."/>
            <person name="Ferreira V.C.A."/>
            <person name="Ferro J.A."/>
            <person name="Fraga J.S."/>
            <person name="Franca S.C."/>
            <person name="Franco M.C."/>
            <person name="Frohme M."/>
            <person name="Furlan L.R."/>
            <person name="Garnier M."/>
            <person name="Goldman G.H."/>
            <person name="Goldman M.H.S."/>
            <person name="Gomes S.L."/>
            <person name="Gruber A."/>
            <person name="Ho P.L."/>
            <person name="Hoheisel J.D."/>
            <person name="Junqueira M.L."/>
            <person name="Kemper E.L."/>
            <person name="Kitajima J.P."/>
            <person name="Krieger J.E."/>
            <person name="Kuramae E.E."/>
            <person name="Laigret F."/>
            <person name="Lambais M.R."/>
            <person name="Leite L.C.C."/>
            <person name="Lemos E.G.M."/>
            <person name="Lemos M.V.F."/>
            <person name="Lopes S.A."/>
            <person name="Lopes C.R."/>
            <person name="Machado J.A."/>
            <person name="Machado M.A."/>
            <person name="Madeira A.M.B.N."/>
            <person name="Madeira H.M.F."/>
            <person name="Marino C.L."/>
            <person name="Marques M.V."/>
            <person name="Martins E.A.L."/>
            <person name="Martins E.M.F."/>
            <person name="Matsukuma A.Y."/>
            <person name="Menck C.F.M."/>
            <person name="Miracca E.C."/>
            <person name="Miyaki C.Y."/>
            <person name="Monteiro-Vitorello C.B."/>
            <person name="Moon D.H."/>
            <person name="Nagai M.A."/>
            <person name="Nascimento A.L.T.O."/>
            <person name="Netto L.E.S."/>
            <person name="Nhani A. Jr."/>
            <person name="Nobrega F.G."/>
            <person name="Nunes L.R."/>
            <person name="Oliveira M.A."/>
            <person name="de Oliveira M.C."/>
            <person name="de Oliveira R.C."/>
            <person name="Palmieri D.A."/>
            <person name="Paris A."/>
            <person name="Peixoto B.R."/>
            <person name="Pereira G.A.G."/>
            <person name="Pereira H.A. Jr."/>
            <person name="Pesquero J.B."/>
            <person name="Quaggio R.B."/>
            <person name="Roberto P.G."/>
            <person name="Rodrigues V."/>
            <person name="de Rosa A.J.M."/>
            <person name="de Rosa V.E. Jr."/>
            <person name="de Sa R.G."/>
            <person name="Santelli R.V."/>
            <person name="Sawasaki H.E."/>
            <person name="da Silva A.C.R."/>
            <person name="da Silva A.M."/>
            <person name="da Silva F.R."/>
            <person name="Silva W.A. Jr."/>
            <person name="da Silveira J.F."/>
            <person name="Silvestri M.L.Z."/>
            <person name="Siqueira W.J."/>
            <person name="de Souza A.A."/>
            <person name="de Souza A.P."/>
            <person name="Terenzi M.F."/>
            <person name="Truffi D."/>
            <person name="Tsai S.M."/>
            <person name="Tsuhako M.H."/>
            <person name="Vallada H."/>
            <person name="Van Sluys M.A."/>
            <person name="Verjovski-Almeida S."/>
            <person name="Vettore A.L."/>
            <person name="Zago M.A."/>
            <person name="Zatz M."/>
            <person name="Meidanis J."/>
            <person name="Setubal J.C."/>
        </authorList>
    </citation>
    <scope>NUCLEOTIDE SEQUENCE [LARGE SCALE GENOMIC DNA]</scope>
    <source>
        <strain>9a5c</strain>
    </source>
</reference>
<dbReference type="EMBL" id="AE003849">
    <property type="protein sequence ID" value="AAF84150.1"/>
    <property type="molecule type" value="Genomic_DNA"/>
</dbReference>
<dbReference type="PIR" id="B82694">
    <property type="entry name" value="B82694"/>
</dbReference>
<dbReference type="SMR" id="Q9PDN8"/>
<dbReference type="STRING" id="160492.XF_1341"/>
<dbReference type="KEGG" id="xfa:XF_1341"/>
<dbReference type="eggNOG" id="COG3142">
    <property type="taxonomic scope" value="Bacteria"/>
</dbReference>
<dbReference type="HOGENOM" id="CLU_050555_3_2_6"/>
<dbReference type="Proteomes" id="UP000000812">
    <property type="component" value="Chromosome"/>
</dbReference>
<dbReference type="GO" id="GO:0005737">
    <property type="term" value="C:cytoplasm"/>
    <property type="evidence" value="ECO:0007669"/>
    <property type="project" value="UniProtKB-SubCell"/>
</dbReference>
<dbReference type="GO" id="GO:0005507">
    <property type="term" value="F:copper ion binding"/>
    <property type="evidence" value="ECO:0007669"/>
    <property type="project" value="TreeGrafter"/>
</dbReference>
<dbReference type="FunFam" id="3.20.20.380:FF:000001">
    <property type="entry name" value="Copper homeostasis protein CutC"/>
    <property type="match status" value="1"/>
</dbReference>
<dbReference type="Gene3D" id="3.20.20.380">
    <property type="entry name" value="Copper homeostasis (CutC) domain"/>
    <property type="match status" value="1"/>
</dbReference>
<dbReference type="HAMAP" id="MF_00795">
    <property type="entry name" value="CutC"/>
    <property type="match status" value="1"/>
</dbReference>
<dbReference type="InterPro" id="IPR005627">
    <property type="entry name" value="CutC-like"/>
</dbReference>
<dbReference type="InterPro" id="IPR036822">
    <property type="entry name" value="CutC-like_dom_sf"/>
</dbReference>
<dbReference type="PANTHER" id="PTHR12598">
    <property type="entry name" value="COPPER HOMEOSTASIS PROTEIN CUTC"/>
    <property type="match status" value="1"/>
</dbReference>
<dbReference type="PANTHER" id="PTHR12598:SF0">
    <property type="entry name" value="COPPER HOMEOSTASIS PROTEIN CUTC HOMOLOG"/>
    <property type="match status" value="1"/>
</dbReference>
<dbReference type="Pfam" id="PF03932">
    <property type="entry name" value="CutC"/>
    <property type="match status" value="1"/>
</dbReference>
<dbReference type="SUPFAM" id="SSF110395">
    <property type="entry name" value="CutC-like"/>
    <property type="match status" value="1"/>
</dbReference>
<name>CUTC_XYLFA</name>
<feature type="chain" id="PRO_0000215084" description="PF03932 family protein CutC">
    <location>
        <begin position="1"/>
        <end position="267"/>
    </location>
</feature>
<gene>
    <name evidence="1" type="primary">cutC</name>
    <name type="ordered locus">XF_1341</name>
</gene>
<organism>
    <name type="scientific">Xylella fastidiosa (strain 9a5c)</name>
    <dbReference type="NCBI Taxonomy" id="160492"/>
    <lineage>
        <taxon>Bacteria</taxon>
        <taxon>Pseudomonadati</taxon>
        <taxon>Pseudomonadota</taxon>
        <taxon>Gammaproteobacteria</taxon>
        <taxon>Lysobacterales</taxon>
        <taxon>Lysobacteraceae</taxon>
        <taxon>Xylella</taxon>
    </lineage>
</organism>
<accession>Q9PDN8</accession>